<accession>A2CC33</accession>
<evidence type="ECO:0000255" key="1">
    <source>
        <dbReference type="HAMAP-Rule" id="MF_01309"/>
    </source>
</evidence>
<evidence type="ECO:0000256" key="2">
    <source>
        <dbReference type="SAM" id="MobiDB-lite"/>
    </source>
</evidence>
<evidence type="ECO:0000305" key="3"/>
<dbReference type="EMBL" id="CP000554">
    <property type="protein sequence ID" value="ABM79043.1"/>
    <property type="molecule type" value="Genomic_DNA"/>
</dbReference>
<dbReference type="RefSeq" id="WP_011826909.1">
    <property type="nucleotide sequence ID" value="NC_008820.1"/>
</dbReference>
<dbReference type="SMR" id="A2CC33"/>
<dbReference type="STRING" id="59922.P9303_23081"/>
<dbReference type="KEGG" id="pmf:P9303_23081"/>
<dbReference type="HOGENOM" id="CLU_058591_0_2_3"/>
<dbReference type="BioCyc" id="PMAR59922:G1G80-2025-MONOMER"/>
<dbReference type="Proteomes" id="UP000002274">
    <property type="component" value="Chromosome"/>
</dbReference>
<dbReference type="GO" id="GO:0022627">
    <property type="term" value="C:cytosolic small ribosomal subunit"/>
    <property type="evidence" value="ECO:0007669"/>
    <property type="project" value="TreeGrafter"/>
</dbReference>
<dbReference type="GO" id="GO:0003729">
    <property type="term" value="F:mRNA binding"/>
    <property type="evidence" value="ECO:0007669"/>
    <property type="project" value="UniProtKB-UniRule"/>
</dbReference>
<dbReference type="GO" id="GO:0019843">
    <property type="term" value="F:rRNA binding"/>
    <property type="evidence" value="ECO:0007669"/>
    <property type="project" value="UniProtKB-UniRule"/>
</dbReference>
<dbReference type="GO" id="GO:0003735">
    <property type="term" value="F:structural constituent of ribosome"/>
    <property type="evidence" value="ECO:0007669"/>
    <property type="project" value="InterPro"/>
</dbReference>
<dbReference type="GO" id="GO:0006412">
    <property type="term" value="P:translation"/>
    <property type="evidence" value="ECO:0007669"/>
    <property type="project" value="UniProtKB-UniRule"/>
</dbReference>
<dbReference type="CDD" id="cd02412">
    <property type="entry name" value="KH-II_30S_S3"/>
    <property type="match status" value="1"/>
</dbReference>
<dbReference type="FunFam" id="3.30.300.20:FF:000001">
    <property type="entry name" value="30S ribosomal protein S3"/>
    <property type="match status" value="1"/>
</dbReference>
<dbReference type="Gene3D" id="3.30.300.20">
    <property type="match status" value="1"/>
</dbReference>
<dbReference type="Gene3D" id="3.30.1140.32">
    <property type="entry name" value="Ribosomal protein S3, C-terminal domain"/>
    <property type="match status" value="1"/>
</dbReference>
<dbReference type="HAMAP" id="MF_01309_B">
    <property type="entry name" value="Ribosomal_uS3_B"/>
    <property type="match status" value="1"/>
</dbReference>
<dbReference type="InterPro" id="IPR004087">
    <property type="entry name" value="KH_dom"/>
</dbReference>
<dbReference type="InterPro" id="IPR015946">
    <property type="entry name" value="KH_dom-like_a/b"/>
</dbReference>
<dbReference type="InterPro" id="IPR004044">
    <property type="entry name" value="KH_dom_type_2"/>
</dbReference>
<dbReference type="InterPro" id="IPR009019">
    <property type="entry name" value="KH_sf_prok-type"/>
</dbReference>
<dbReference type="InterPro" id="IPR036419">
    <property type="entry name" value="Ribosomal_S3_C_sf"/>
</dbReference>
<dbReference type="InterPro" id="IPR005704">
    <property type="entry name" value="Ribosomal_uS3_bac-typ"/>
</dbReference>
<dbReference type="InterPro" id="IPR001351">
    <property type="entry name" value="Ribosomal_uS3_C"/>
</dbReference>
<dbReference type="InterPro" id="IPR018280">
    <property type="entry name" value="Ribosomal_uS3_CS"/>
</dbReference>
<dbReference type="NCBIfam" id="TIGR01009">
    <property type="entry name" value="rpsC_bact"/>
    <property type="match status" value="1"/>
</dbReference>
<dbReference type="PANTHER" id="PTHR11760">
    <property type="entry name" value="30S/40S RIBOSOMAL PROTEIN S3"/>
    <property type="match status" value="1"/>
</dbReference>
<dbReference type="PANTHER" id="PTHR11760:SF19">
    <property type="entry name" value="SMALL RIBOSOMAL SUBUNIT PROTEIN US3C"/>
    <property type="match status" value="1"/>
</dbReference>
<dbReference type="Pfam" id="PF07650">
    <property type="entry name" value="KH_2"/>
    <property type="match status" value="1"/>
</dbReference>
<dbReference type="Pfam" id="PF00189">
    <property type="entry name" value="Ribosomal_S3_C"/>
    <property type="match status" value="1"/>
</dbReference>
<dbReference type="SMART" id="SM00322">
    <property type="entry name" value="KH"/>
    <property type="match status" value="1"/>
</dbReference>
<dbReference type="SUPFAM" id="SSF54814">
    <property type="entry name" value="Prokaryotic type KH domain (KH-domain type II)"/>
    <property type="match status" value="1"/>
</dbReference>
<dbReference type="SUPFAM" id="SSF54821">
    <property type="entry name" value="Ribosomal protein S3 C-terminal domain"/>
    <property type="match status" value="1"/>
</dbReference>
<dbReference type="PROSITE" id="PS50823">
    <property type="entry name" value="KH_TYPE_2"/>
    <property type="match status" value="1"/>
</dbReference>
<dbReference type="PROSITE" id="PS00548">
    <property type="entry name" value="RIBOSOMAL_S3"/>
    <property type="match status" value="1"/>
</dbReference>
<proteinExistence type="inferred from homology"/>
<reference key="1">
    <citation type="journal article" date="2007" name="PLoS Genet.">
        <title>Patterns and implications of gene gain and loss in the evolution of Prochlorococcus.</title>
        <authorList>
            <person name="Kettler G.C."/>
            <person name="Martiny A.C."/>
            <person name="Huang K."/>
            <person name="Zucker J."/>
            <person name="Coleman M.L."/>
            <person name="Rodrigue S."/>
            <person name="Chen F."/>
            <person name="Lapidus A."/>
            <person name="Ferriera S."/>
            <person name="Johnson J."/>
            <person name="Steglich C."/>
            <person name="Church G.M."/>
            <person name="Richardson P."/>
            <person name="Chisholm S.W."/>
        </authorList>
    </citation>
    <scope>NUCLEOTIDE SEQUENCE [LARGE SCALE GENOMIC DNA]</scope>
    <source>
        <strain>MIT 9303</strain>
    </source>
</reference>
<name>RS3_PROM3</name>
<gene>
    <name evidence="1" type="primary">rpsC</name>
    <name evidence="1" type="synonym">rps3</name>
    <name type="ordered locus">P9303_23081</name>
</gene>
<comment type="function">
    <text evidence="1">Binds the lower part of the 30S subunit head. Binds mRNA in the 70S ribosome, positioning it for translation.</text>
</comment>
<comment type="subunit">
    <text evidence="1">Part of the 30S ribosomal subunit. Forms a tight complex with proteins S10 and S14.</text>
</comment>
<comment type="similarity">
    <text evidence="1">Belongs to the universal ribosomal protein uS3 family.</text>
</comment>
<protein>
    <recommendedName>
        <fullName evidence="1">Small ribosomal subunit protein uS3</fullName>
    </recommendedName>
    <alternativeName>
        <fullName evidence="3">30S ribosomal protein S3</fullName>
    </alternativeName>
</protein>
<sequence>MGNKIHPTGLRLGITQEHRSRWYATSKMYPILLQEDDRIRRFIHKKYGAAGISDVLIARKADQLEVELKTARPGVLVGRQGSGIEELRTGIQKTIGDHSRQVRINVVEVERVDADAFLLAEYIAQQLEKRVAFRRTIRMAVQRAQRAGVLGLKIQVGGRLNGAEIARNEWTREGRVPLHTLRAEIDYATKVASTTYGVLGIKVWIFKGEVLGDEAQSMPVGASPRRRGNRRPQQFEDRSNEG</sequence>
<feature type="chain" id="PRO_0000293852" description="Small ribosomal subunit protein uS3">
    <location>
        <begin position="1"/>
        <end position="242"/>
    </location>
</feature>
<feature type="domain" description="KH type-2" evidence="1">
    <location>
        <begin position="39"/>
        <end position="110"/>
    </location>
</feature>
<feature type="region of interest" description="Disordered" evidence="2">
    <location>
        <begin position="216"/>
        <end position="242"/>
    </location>
</feature>
<feature type="compositionally biased region" description="Basic and acidic residues" evidence="2">
    <location>
        <begin position="233"/>
        <end position="242"/>
    </location>
</feature>
<keyword id="KW-0687">Ribonucleoprotein</keyword>
<keyword id="KW-0689">Ribosomal protein</keyword>
<keyword id="KW-0694">RNA-binding</keyword>
<keyword id="KW-0699">rRNA-binding</keyword>
<organism>
    <name type="scientific">Prochlorococcus marinus (strain MIT 9303)</name>
    <dbReference type="NCBI Taxonomy" id="59922"/>
    <lineage>
        <taxon>Bacteria</taxon>
        <taxon>Bacillati</taxon>
        <taxon>Cyanobacteriota</taxon>
        <taxon>Cyanophyceae</taxon>
        <taxon>Synechococcales</taxon>
        <taxon>Prochlorococcaceae</taxon>
        <taxon>Prochlorococcus</taxon>
    </lineage>
</organism>